<protein>
    <recommendedName>
        <fullName evidence="1">Large ribosomal subunit protein uL29</fullName>
    </recommendedName>
    <alternativeName>
        <fullName evidence="2">50S ribosomal protein L29</fullName>
    </alternativeName>
</protein>
<sequence>MGKFKLRPDEIREMTPEERREKLKELKAELLREMTSKSISGVPDNPGRVKEIKKNIARILTTEREEELRKIRETEKG</sequence>
<keyword id="KW-1185">Reference proteome</keyword>
<keyword id="KW-0687">Ribonucleoprotein</keyword>
<keyword id="KW-0689">Ribosomal protein</keyword>
<organism>
    <name type="scientific">Methanopyrus kandleri (strain AV19 / DSM 6324 / JCM 9639 / NBRC 100938)</name>
    <dbReference type="NCBI Taxonomy" id="190192"/>
    <lineage>
        <taxon>Archaea</taxon>
        <taxon>Methanobacteriati</taxon>
        <taxon>Methanobacteriota</taxon>
        <taxon>Methanomada group</taxon>
        <taxon>Methanopyri</taxon>
        <taxon>Methanopyrales</taxon>
        <taxon>Methanopyraceae</taxon>
        <taxon>Methanopyrus</taxon>
    </lineage>
</organism>
<gene>
    <name evidence="1" type="primary">rpl29</name>
    <name type="ordered locus">MK0843</name>
</gene>
<name>RL29_METKA</name>
<reference key="1">
    <citation type="journal article" date="2002" name="Proc. Natl. Acad. Sci. U.S.A.">
        <title>The complete genome of hyperthermophile Methanopyrus kandleri AV19 and monophyly of archaeal methanogens.</title>
        <authorList>
            <person name="Slesarev A.I."/>
            <person name="Mezhevaya K.V."/>
            <person name="Makarova K.S."/>
            <person name="Polushin N.N."/>
            <person name="Shcherbinina O.V."/>
            <person name="Shakhova V.V."/>
            <person name="Belova G.I."/>
            <person name="Aravind L."/>
            <person name="Natale D.A."/>
            <person name="Rogozin I.B."/>
            <person name="Tatusov R.L."/>
            <person name="Wolf Y.I."/>
            <person name="Stetter K.O."/>
            <person name="Malykh A.G."/>
            <person name="Koonin E.V."/>
            <person name="Kozyavkin S.A."/>
        </authorList>
    </citation>
    <scope>NUCLEOTIDE SEQUENCE [LARGE SCALE GENOMIC DNA]</scope>
    <source>
        <strain>AV19 / DSM 6324 / JCM 9639 / NBRC 100938</strain>
    </source>
</reference>
<dbReference type="EMBL" id="AE009439">
    <property type="protein sequence ID" value="AAM02056.1"/>
    <property type="molecule type" value="Genomic_DNA"/>
</dbReference>
<dbReference type="SMR" id="Q8TX34"/>
<dbReference type="FunCoup" id="Q8TX34">
    <property type="interactions" value="126"/>
</dbReference>
<dbReference type="STRING" id="190192.MK0843"/>
<dbReference type="PaxDb" id="190192-MK0843"/>
<dbReference type="EnsemblBacteria" id="AAM02056">
    <property type="protein sequence ID" value="AAM02056"/>
    <property type="gene ID" value="MK0843"/>
</dbReference>
<dbReference type="KEGG" id="mka:MK0843"/>
<dbReference type="HOGENOM" id="CLU_158491_2_1_2"/>
<dbReference type="InParanoid" id="Q8TX34"/>
<dbReference type="Proteomes" id="UP000001826">
    <property type="component" value="Chromosome"/>
</dbReference>
<dbReference type="GO" id="GO:1990904">
    <property type="term" value="C:ribonucleoprotein complex"/>
    <property type="evidence" value="ECO:0007669"/>
    <property type="project" value="UniProtKB-KW"/>
</dbReference>
<dbReference type="GO" id="GO:0005840">
    <property type="term" value="C:ribosome"/>
    <property type="evidence" value="ECO:0007669"/>
    <property type="project" value="UniProtKB-KW"/>
</dbReference>
<dbReference type="GO" id="GO:0003735">
    <property type="term" value="F:structural constituent of ribosome"/>
    <property type="evidence" value="ECO:0007669"/>
    <property type="project" value="InterPro"/>
</dbReference>
<dbReference type="GO" id="GO:0006412">
    <property type="term" value="P:translation"/>
    <property type="evidence" value="ECO:0007669"/>
    <property type="project" value="UniProtKB-UniRule"/>
</dbReference>
<dbReference type="CDD" id="cd00427">
    <property type="entry name" value="Ribosomal_L29_HIP"/>
    <property type="match status" value="1"/>
</dbReference>
<dbReference type="Gene3D" id="1.10.287.310">
    <property type="match status" value="1"/>
</dbReference>
<dbReference type="HAMAP" id="MF_00374">
    <property type="entry name" value="Ribosomal_uL29"/>
    <property type="match status" value="1"/>
</dbReference>
<dbReference type="InterPro" id="IPR001854">
    <property type="entry name" value="Ribosomal_uL29"/>
</dbReference>
<dbReference type="InterPro" id="IPR018254">
    <property type="entry name" value="Ribosomal_uL29_CS"/>
</dbReference>
<dbReference type="InterPro" id="IPR036049">
    <property type="entry name" value="Ribosomal_uL29_sf"/>
</dbReference>
<dbReference type="NCBIfam" id="TIGR00012">
    <property type="entry name" value="L29"/>
    <property type="match status" value="1"/>
</dbReference>
<dbReference type="Pfam" id="PF00831">
    <property type="entry name" value="Ribosomal_L29"/>
    <property type="match status" value="1"/>
</dbReference>
<dbReference type="SUPFAM" id="SSF46561">
    <property type="entry name" value="Ribosomal protein L29 (L29p)"/>
    <property type="match status" value="1"/>
</dbReference>
<dbReference type="PROSITE" id="PS00579">
    <property type="entry name" value="RIBOSOMAL_L29"/>
    <property type="match status" value="1"/>
</dbReference>
<accession>Q8TX34</accession>
<proteinExistence type="inferred from homology"/>
<evidence type="ECO:0000255" key="1">
    <source>
        <dbReference type="HAMAP-Rule" id="MF_00374"/>
    </source>
</evidence>
<evidence type="ECO:0000305" key="2"/>
<comment type="similarity">
    <text evidence="1">Belongs to the universal ribosomal protein uL29 family.</text>
</comment>
<feature type="chain" id="PRO_0000130512" description="Large ribosomal subunit protein uL29">
    <location>
        <begin position="1"/>
        <end position="77"/>
    </location>
</feature>